<comment type="function">
    <text evidence="1">Part of the Sec protein translocase complex. Interacts with the SecYEG preprotein conducting channel. Has a central role in coupling the hydrolysis of ATP to the transfer of proteins into and across the cell membrane, serving as an ATP-driven molecular motor driving the stepwise translocation of polypeptide chains across the membrane.</text>
</comment>
<comment type="function">
    <text evidence="1">Probably participates in protein translocation into and across both the cytoplasmic and thylakoid membranes in cyanobacterial cells.</text>
</comment>
<comment type="catalytic activity">
    <reaction evidence="1">
        <text>ATP + H2O + cellular proteinSide 1 = ADP + phosphate + cellular proteinSide 2.</text>
        <dbReference type="EC" id="7.4.2.8"/>
    </reaction>
</comment>
<comment type="subunit">
    <text evidence="1">Monomer and homodimer. Part of the essential Sec protein translocation apparatus which comprises SecA, SecYEG and auxiliary proteins SecDF. Other proteins may also be involved.</text>
</comment>
<comment type="subcellular location">
    <subcellularLocation>
        <location evidence="1">Cell inner membrane</location>
        <topology evidence="1">Peripheral membrane protein</topology>
        <orientation evidence="1">Cytoplasmic side</orientation>
    </subcellularLocation>
    <subcellularLocation>
        <location evidence="1">Cellular thylakoid membrane</location>
        <topology evidence="1">Peripheral membrane protein</topology>
        <orientation evidence="1">Cytoplasmic side</orientation>
    </subcellularLocation>
    <subcellularLocation>
        <location evidence="1">Cytoplasm</location>
    </subcellularLocation>
</comment>
<comment type="similarity">
    <text evidence="1">Belongs to the SecA family.</text>
</comment>
<dbReference type="EC" id="7.4.2.8" evidence="1"/>
<dbReference type="EMBL" id="CP000878">
    <property type="protein sequence ID" value="ABX09698.1"/>
    <property type="molecule type" value="Genomic_DNA"/>
</dbReference>
<dbReference type="RefSeq" id="WP_012196318.1">
    <property type="nucleotide sequence ID" value="NC_009976.1"/>
</dbReference>
<dbReference type="SMR" id="A9BD85"/>
<dbReference type="STRING" id="93059.P9211_17671"/>
<dbReference type="KEGG" id="pmj:P9211_17671"/>
<dbReference type="eggNOG" id="COG0653">
    <property type="taxonomic scope" value="Bacteria"/>
</dbReference>
<dbReference type="HOGENOM" id="CLU_005314_3_0_3"/>
<dbReference type="OrthoDB" id="9805579at2"/>
<dbReference type="Proteomes" id="UP000000788">
    <property type="component" value="Chromosome"/>
</dbReference>
<dbReference type="GO" id="GO:0031522">
    <property type="term" value="C:cell envelope Sec protein transport complex"/>
    <property type="evidence" value="ECO:0007669"/>
    <property type="project" value="TreeGrafter"/>
</dbReference>
<dbReference type="GO" id="GO:0005829">
    <property type="term" value="C:cytosol"/>
    <property type="evidence" value="ECO:0007669"/>
    <property type="project" value="TreeGrafter"/>
</dbReference>
<dbReference type="GO" id="GO:0031676">
    <property type="term" value="C:plasma membrane-derived thylakoid membrane"/>
    <property type="evidence" value="ECO:0007669"/>
    <property type="project" value="UniProtKB-SubCell"/>
</dbReference>
<dbReference type="GO" id="GO:0005524">
    <property type="term" value="F:ATP binding"/>
    <property type="evidence" value="ECO:0007669"/>
    <property type="project" value="UniProtKB-UniRule"/>
</dbReference>
<dbReference type="GO" id="GO:0008564">
    <property type="term" value="F:protein-exporting ATPase activity"/>
    <property type="evidence" value="ECO:0007669"/>
    <property type="project" value="UniProtKB-EC"/>
</dbReference>
<dbReference type="GO" id="GO:0065002">
    <property type="term" value="P:intracellular protein transmembrane transport"/>
    <property type="evidence" value="ECO:0007669"/>
    <property type="project" value="UniProtKB-UniRule"/>
</dbReference>
<dbReference type="GO" id="GO:0017038">
    <property type="term" value="P:protein import"/>
    <property type="evidence" value="ECO:0007669"/>
    <property type="project" value="InterPro"/>
</dbReference>
<dbReference type="GO" id="GO:0006605">
    <property type="term" value="P:protein targeting"/>
    <property type="evidence" value="ECO:0007669"/>
    <property type="project" value="UniProtKB-UniRule"/>
</dbReference>
<dbReference type="GO" id="GO:0043952">
    <property type="term" value="P:protein transport by the Sec complex"/>
    <property type="evidence" value="ECO:0007669"/>
    <property type="project" value="TreeGrafter"/>
</dbReference>
<dbReference type="CDD" id="cd17928">
    <property type="entry name" value="DEXDc_SecA"/>
    <property type="match status" value="1"/>
</dbReference>
<dbReference type="CDD" id="cd18803">
    <property type="entry name" value="SF2_C_secA"/>
    <property type="match status" value="1"/>
</dbReference>
<dbReference type="FunFam" id="3.90.1440.10:FF:000003">
    <property type="entry name" value="Preprotein translocase SecA subunit"/>
    <property type="match status" value="1"/>
</dbReference>
<dbReference type="FunFam" id="3.40.50.300:FF:000429">
    <property type="entry name" value="Preprotein translocase subunit SecA"/>
    <property type="match status" value="1"/>
</dbReference>
<dbReference type="FunFam" id="1.10.3060.10:FF:000003">
    <property type="entry name" value="Protein translocase subunit SecA"/>
    <property type="match status" value="1"/>
</dbReference>
<dbReference type="FunFam" id="3.40.50.300:FF:000334">
    <property type="entry name" value="Protein translocase subunit SecA"/>
    <property type="match status" value="1"/>
</dbReference>
<dbReference type="Gene3D" id="1.10.3060.10">
    <property type="entry name" value="Helical scaffold and wing domains of SecA"/>
    <property type="match status" value="1"/>
</dbReference>
<dbReference type="Gene3D" id="3.40.50.300">
    <property type="entry name" value="P-loop containing nucleotide triphosphate hydrolases"/>
    <property type="match status" value="2"/>
</dbReference>
<dbReference type="Gene3D" id="3.90.1440.10">
    <property type="entry name" value="SecA, preprotein cross-linking domain"/>
    <property type="match status" value="1"/>
</dbReference>
<dbReference type="HAMAP" id="MF_01382">
    <property type="entry name" value="SecA"/>
    <property type="match status" value="1"/>
</dbReference>
<dbReference type="InterPro" id="IPR014001">
    <property type="entry name" value="Helicase_ATP-bd"/>
</dbReference>
<dbReference type="InterPro" id="IPR027417">
    <property type="entry name" value="P-loop_NTPase"/>
</dbReference>
<dbReference type="InterPro" id="IPR000185">
    <property type="entry name" value="SecA"/>
</dbReference>
<dbReference type="InterPro" id="IPR020937">
    <property type="entry name" value="SecA_CS"/>
</dbReference>
<dbReference type="InterPro" id="IPR011115">
    <property type="entry name" value="SecA_DEAD"/>
</dbReference>
<dbReference type="InterPro" id="IPR014018">
    <property type="entry name" value="SecA_motor_DEAD"/>
</dbReference>
<dbReference type="InterPro" id="IPR011130">
    <property type="entry name" value="SecA_preprotein_X-link_dom"/>
</dbReference>
<dbReference type="InterPro" id="IPR044722">
    <property type="entry name" value="SecA_SF2_C"/>
</dbReference>
<dbReference type="InterPro" id="IPR011116">
    <property type="entry name" value="SecA_Wing/Scaffold"/>
</dbReference>
<dbReference type="InterPro" id="IPR036266">
    <property type="entry name" value="SecA_Wing/Scaffold_sf"/>
</dbReference>
<dbReference type="InterPro" id="IPR036670">
    <property type="entry name" value="SecA_X-link_sf"/>
</dbReference>
<dbReference type="NCBIfam" id="TIGR00963">
    <property type="entry name" value="secA"/>
    <property type="match status" value="1"/>
</dbReference>
<dbReference type="PANTHER" id="PTHR30612:SF0">
    <property type="entry name" value="CHLOROPLAST PROTEIN-TRANSPORTING ATPASE"/>
    <property type="match status" value="1"/>
</dbReference>
<dbReference type="PANTHER" id="PTHR30612">
    <property type="entry name" value="SECA INNER MEMBRANE COMPONENT OF SEC PROTEIN SECRETION SYSTEM"/>
    <property type="match status" value="1"/>
</dbReference>
<dbReference type="Pfam" id="PF21090">
    <property type="entry name" value="P-loop_SecA"/>
    <property type="match status" value="1"/>
</dbReference>
<dbReference type="Pfam" id="PF07517">
    <property type="entry name" value="SecA_DEAD"/>
    <property type="match status" value="1"/>
</dbReference>
<dbReference type="Pfam" id="PF01043">
    <property type="entry name" value="SecA_PP_bind"/>
    <property type="match status" value="1"/>
</dbReference>
<dbReference type="Pfam" id="PF07516">
    <property type="entry name" value="SecA_SW"/>
    <property type="match status" value="1"/>
</dbReference>
<dbReference type="PRINTS" id="PR00906">
    <property type="entry name" value="SECA"/>
</dbReference>
<dbReference type="SMART" id="SM00957">
    <property type="entry name" value="SecA_DEAD"/>
    <property type="match status" value="1"/>
</dbReference>
<dbReference type="SMART" id="SM00958">
    <property type="entry name" value="SecA_PP_bind"/>
    <property type="match status" value="1"/>
</dbReference>
<dbReference type="SUPFAM" id="SSF81886">
    <property type="entry name" value="Helical scaffold and wing domains of SecA"/>
    <property type="match status" value="1"/>
</dbReference>
<dbReference type="SUPFAM" id="SSF52540">
    <property type="entry name" value="P-loop containing nucleoside triphosphate hydrolases"/>
    <property type="match status" value="2"/>
</dbReference>
<dbReference type="SUPFAM" id="SSF81767">
    <property type="entry name" value="Pre-protein crosslinking domain of SecA"/>
    <property type="match status" value="1"/>
</dbReference>
<dbReference type="PROSITE" id="PS01312">
    <property type="entry name" value="SECA"/>
    <property type="match status" value="1"/>
</dbReference>
<dbReference type="PROSITE" id="PS51196">
    <property type="entry name" value="SECA_MOTOR_DEAD"/>
    <property type="match status" value="1"/>
</dbReference>
<organism>
    <name type="scientific">Prochlorococcus marinus (strain MIT 9211)</name>
    <dbReference type="NCBI Taxonomy" id="93059"/>
    <lineage>
        <taxon>Bacteria</taxon>
        <taxon>Bacillati</taxon>
        <taxon>Cyanobacteriota</taxon>
        <taxon>Cyanophyceae</taxon>
        <taxon>Synechococcales</taxon>
        <taxon>Prochlorococcaceae</taxon>
        <taxon>Prochlorococcus</taxon>
    </lineage>
</organism>
<feature type="chain" id="PRO_1000145044" description="Protein translocase subunit SecA">
    <location>
        <begin position="1"/>
        <end position="945"/>
    </location>
</feature>
<feature type="region of interest" description="Disordered" evidence="2">
    <location>
        <begin position="533"/>
        <end position="568"/>
    </location>
</feature>
<feature type="compositionally biased region" description="Basic and acidic residues" evidence="2">
    <location>
        <begin position="547"/>
        <end position="561"/>
    </location>
</feature>
<feature type="binding site" evidence="1">
    <location>
        <position position="90"/>
    </location>
    <ligand>
        <name>ATP</name>
        <dbReference type="ChEBI" id="CHEBI:30616"/>
    </ligand>
</feature>
<feature type="binding site" evidence="1">
    <location>
        <begin position="108"/>
        <end position="112"/>
    </location>
    <ligand>
        <name>ATP</name>
        <dbReference type="ChEBI" id="CHEBI:30616"/>
    </ligand>
</feature>
<feature type="binding site" evidence="1">
    <location>
        <position position="509"/>
    </location>
    <ligand>
        <name>ATP</name>
        <dbReference type="ChEBI" id="CHEBI:30616"/>
    </ligand>
</feature>
<reference key="1">
    <citation type="journal article" date="2007" name="PLoS Genet.">
        <title>Patterns and implications of gene gain and loss in the evolution of Prochlorococcus.</title>
        <authorList>
            <person name="Kettler G.C."/>
            <person name="Martiny A.C."/>
            <person name="Huang K."/>
            <person name="Zucker J."/>
            <person name="Coleman M.L."/>
            <person name="Rodrigue S."/>
            <person name="Chen F."/>
            <person name="Lapidus A."/>
            <person name="Ferriera S."/>
            <person name="Johnson J."/>
            <person name="Steglich C."/>
            <person name="Church G.M."/>
            <person name="Richardson P."/>
            <person name="Chisholm S.W."/>
        </authorList>
    </citation>
    <scope>NUCLEOTIDE SEQUENCE [LARGE SCALE GENOMIC DNA]</scope>
    <source>
        <strain>MIT 9211</strain>
    </source>
</reference>
<gene>
    <name evidence="1" type="primary">secA</name>
    <name type="ordered locus">P9211_17671</name>
</gene>
<name>SECA_PROM4</name>
<protein>
    <recommendedName>
        <fullName evidence="1">Protein translocase subunit SecA</fullName>
        <ecNumber evidence="1">7.4.2.8</ecNumber>
    </recommendedName>
</protein>
<sequence length="945" mass="107344">MLKLLLGDPNARKLKRYLPIVSDINLLEEEISPLTDDELRAKTADFRERLAKVSGLEKQRELLDEILPEVFSVVREASKRVLGMRHFDVQLIGGMVLHEGQIAEMKTGEGKTLVATLPSFLNALTGRGVHVVTVNDYLARRDAEWMGQVHRFLGLSVGLIQQDMTPLERRKNYECDITYATNSELGFDYLRDNMASDMSEIVQRKFQFCIIDEVDSILIDEARTPLIISGQIERPQEKYQKAAEVVASLIRAAEMGKDGIDPEGDYEVDEKQRTCTLTDEGFARSEELLKVNDLYDPKDPWAHYITNALKAKELFVKDVNYIVRNGEAVIVDEFTGRVMPGRRWSDGQHQAIEAKEKLNIQSETQTLASITYQNFFLLYPRLAGMTGTAKTEEVEFEKTYQLETTVIPTNRPRSRNDWVDQVYKTEAGKWRAVANETAEVHKKGRPVLVGTTSVEKSELLSSLLAEEQIPHNLLNAKPENVEREAEIVAQAGRAGAVTIATNMAGRGTDIILGGNSDYMARLKLREVLLPKLVKPEDGHKPPVPLQRRSESSGFGEDKDVTTDNSKPLSASSALGTLYPCVLTEDTEKVLIDLERKLVADWGDRALTAIELEDRISTAAEKAPTNDASIQLMRDAISLVKSEYDVVVQKEEVQVREAGGLHVIGTERHESRRVDNQLRGRAGRQGDLGSTRFFLSLGDNLLRIFGGDRVASLMNAFKVDEDMPIESGMLTRSLESAQKKVETYYYDIRKQVFEYDEVMNNQRRAVYSERRRVLDGFGLKKQVIGYGEKTMEEIVYAYVNPDLPSEEWDLAQLVSKVKEFVYLLNDLKPDQLEGLDIDELKAFLQEQLRNAYDLKEAQIEEQKPGLMKEAERFFILQQIDTLWREHLQAMDALRESVGLRGYGQKDPLIEYKNEGYDMFLEMMTNMRRNVIYSMFMFQPAPESDKE</sequence>
<evidence type="ECO:0000255" key="1">
    <source>
        <dbReference type="HAMAP-Rule" id="MF_01382"/>
    </source>
</evidence>
<evidence type="ECO:0000256" key="2">
    <source>
        <dbReference type="SAM" id="MobiDB-lite"/>
    </source>
</evidence>
<proteinExistence type="inferred from homology"/>
<keyword id="KW-0067">ATP-binding</keyword>
<keyword id="KW-0997">Cell inner membrane</keyword>
<keyword id="KW-1003">Cell membrane</keyword>
<keyword id="KW-0963">Cytoplasm</keyword>
<keyword id="KW-0472">Membrane</keyword>
<keyword id="KW-0547">Nucleotide-binding</keyword>
<keyword id="KW-0653">Protein transport</keyword>
<keyword id="KW-1185">Reference proteome</keyword>
<keyword id="KW-0793">Thylakoid</keyword>
<keyword id="KW-1278">Translocase</keyword>
<keyword id="KW-0811">Translocation</keyword>
<keyword id="KW-0813">Transport</keyword>
<accession>A9BD85</accession>